<organism>
    <name type="scientific">Crotalus durissus terrificus</name>
    <name type="common">South American rattlesnake</name>
    <dbReference type="NCBI Taxonomy" id="8732"/>
    <lineage>
        <taxon>Eukaryota</taxon>
        <taxon>Metazoa</taxon>
        <taxon>Chordata</taxon>
        <taxon>Craniata</taxon>
        <taxon>Vertebrata</taxon>
        <taxon>Euteleostomi</taxon>
        <taxon>Lepidosauria</taxon>
        <taxon>Squamata</taxon>
        <taxon>Bifurcata</taxon>
        <taxon>Unidentata</taxon>
        <taxon>Episquamata</taxon>
        <taxon>Toxicofera</taxon>
        <taxon>Serpentes</taxon>
        <taxon>Colubroidea</taxon>
        <taxon>Viperidae</taxon>
        <taxon>Crotalinae</taxon>
        <taxon>Crotalus</taxon>
    </lineage>
</organism>
<reference key="1">
    <citation type="journal article" date="1999" name="Toxicon">
        <title>Nucleotide sequence of crotamine isoform precursors from a single South American rattlesnake (Crotalus durissus terrificus).</title>
        <authorList>
            <person name="Radis-Baptista G."/>
            <person name="Oguiura N."/>
            <person name="Hayashi M.A.F."/>
            <person name="Camargo M.E."/>
            <person name="Grego K.F."/>
            <person name="Oliveira E.B."/>
            <person name="Yamane T."/>
        </authorList>
    </citation>
    <scope>NUCLEOTIDE SEQUENCE [MRNA]</scope>
    <source>
        <strain>Martinopolis</strain>
        <tissue>Venom gland</tissue>
    </source>
</reference>
<reference key="2">
    <citation type="journal article" date="2003" name="Toxicon">
        <title>Structure and chromosomal localization of the gene for crotamine, a toxin from the South American rattlesnake, Crotalus durissus terrificus.</title>
        <authorList>
            <person name="Radis-Baptista G."/>
            <person name="Kubo T."/>
            <person name="Oguiura N."/>
            <person name="Svartman M."/>
            <person name="Almeida T.M.B."/>
            <person name="Batistic R.F."/>
            <person name="Oliveira E.B."/>
            <person name="Vianna-Morgante A.M."/>
            <person name="Yamane T."/>
        </authorList>
    </citation>
    <scope>NUCLEOTIDE SEQUENCE [GENOMIC DNA]</scope>
    <source>
        <tissue>Liver</tissue>
    </source>
</reference>
<reference key="3">
    <citation type="journal article" date="1975" name="Hoppe-Seyler's Z. Physiol. Chem.">
        <title>The primary structure of crotamine.</title>
        <authorList>
            <person name="Laure C.J."/>
        </authorList>
    </citation>
    <scope>PROTEIN SEQUENCE OF 23-64</scope>
    <scope>FUNCTION</scope>
    <scope>TOXIC DOSE</scope>
    <scope>SUBCELLULAR LOCATION</scope>
</reference>
<reference key="4">
    <citation type="journal article" date="2012" name="Mol. Pharmacol.">
        <title>Crotamine pharmacology revisited: novel insights based on the inhibition of KV channels.</title>
        <authorList>
            <person name="Peigneur S."/>
            <person name="Orts D.J."/>
            <person name="Prieto da Silva A.R."/>
            <person name="Oguiura N."/>
            <person name="Boni-Mitake M."/>
            <person name="de Oliveira E.B."/>
            <person name="Zaharenko A.J."/>
            <person name="de Freitas J.C."/>
            <person name="Tytgat J."/>
        </authorList>
    </citation>
    <scope>PROTEIN SEQUENCE OF 23-42</scope>
    <scope>MASS SPECTROMETRY</scope>
    <scope>FUNCTION AS POTASSIUM CHANNEL INHIBITOR</scope>
    <scope>PROBABLE SITES AT TYR-23; LYS-24; ARG-55 AND TRP-56</scope>
</reference>
<reference key="5">
    <citation type="journal article" date="1978" name="Br. J. Pharmacol.">
        <title>Effect of crotamine, a toxin of South American rattlesnake venom, on the sodium channel of murine skeletal muscle.</title>
        <authorList>
            <person name="Chang C.C."/>
            <person name="Tseng K.H."/>
        </authorList>
    </citation>
    <scope>FUNCTION</scope>
    <source>
        <tissue>Venom</tissue>
    </source>
</reference>
<reference key="6">
    <citation type="journal article" date="1998" name="Toxicon">
        <title>The analgesic activity of crotamine, a neurotoxin from Crotalus durissus terrificus (South American rattlesnake) venom: a biochemical and pharmacological study.</title>
        <authorList>
            <person name="Mancin A.C."/>
            <person name="Soares A.M."/>
            <person name="Andriao-Escarso S.H."/>
            <person name="Faca V.M."/>
            <person name="Greene L.J."/>
            <person name="Zuccolotto S."/>
            <person name="Pela I.R."/>
            <person name="Giglio J.R."/>
        </authorList>
    </citation>
    <scope>FUNCTION</scope>
    <scope>TOXIC DOSE</scope>
</reference>
<reference key="7">
    <citation type="journal article" date="2004" name="FASEB J.">
        <title>Crotamine is a novel cell-penetrating protein from the venom of rattlesnake Crotalus durissus terrificus.</title>
        <authorList>
            <person name="Kerkis A."/>
            <person name="Kerkis I."/>
            <person name="Radis-Baptista G."/>
            <person name="Oliveira E.B."/>
            <person name="Vianna-Morgante A.M."/>
            <person name="Pereira L.V."/>
            <person name="Yamane T."/>
        </authorList>
    </citation>
    <scope>FUNCTION AS CELL PENETRATING PEPTIDE</scope>
</reference>
<reference key="8">
    <citation type="journal article" date="2007" name="J. Biol. Chem.">
        <title>Crotamine mediates gene delivery into cells through the binding to heparan sulfate proteoglycans.</title>
        <authorList>
            <person name="Nascimento F.D."/>
            <person name="Hayashi M.A.F."/>
            <person name="Kerkis A."/>
            <person name="Oliveira V."/>
            <person name="Oliveira E.B."/>
            <person name="Radis-Baptista G."/>
            <person name="Nader H.B."/>
            <person name="Yamane T."/>
            <person name="Tersariol I.L."/>
            <person name="Kerkis I."/>
        </authorList>
    </citation>
    <scope>FUNCTION AS CELL PENETRATING PEPTIDE</scope>
</reference>
<reference key="9">
    <citation type="journal article" date="2007" name="Toxicon">
        <title>Crotamine inhibits preferentially fast-twitching muscles but is inactive on sodium channels.</title>
        <authorList>
            <person name="Rizzi C.T."/>
            <person name="Carvalho-de-Souza J.L."/>
            <person name="Schiavon E."/>
            <person name="Cassola A.C."/>
            <person name="Wanke E."/>
            <person name="Troncone L.R."/>
        </authorList>
    </citation>
    <scope>FUNCTION</scope>
</reference>
<reference key="10">
    <citation type="journal article" date="2008" name="Toxicon">
        <title>Cytotoxic effects of crotamine are mediated through lysosomal membrane permeabilization.</title>
        <authorList>
            <person name="Hayashi M.A.F."/>
            <person name="Nascimento F.D."/>
            <person name="Kerkis A."/>
            <person name="Oliveira V."/>
            <person name="Oliveira E.B."/>
            <person name="Pereira A."/>
            <person name="Radis-Baptista G."/>
            <person name="Nader H.B."/>
            <person name="Yamane T."/>
            <person name="Kerkis I."/>
            <person name="Tersariol I.L."/>
        </authorList>
    </citation>
    <scope>FUNCTION</scope>
</reference>
<reference key="11">
    <citation type="journal article" date="2009" name="Proc. Natl. Acad. Sci. U.S.A.">
        <title>Selective reciprocity in antimicrobial activity versus cytotoxicity of hBD-2 and crotamine.</title>
        <authorList>
            <person name="Yount N.Y."/>
            <person name="Kupferwasser D."/>
            <person name="Spisni A."/>
            <person name="Dutz S.M."/>
            <person name="Ramjan Z.H."/>
            <person name="Sharma S."/>
            <person name="Waring A.J."/>
            <person name="Yeaman M.R."/>
        </authorList>
    </citation>
    <scope>FUNCTION AS ANTIMICROBIAL PEPTIDE</scope>
    <scope>DOCKING STUDIES WITH POTASSIUM CHANNELS</scope>
</reference>
<reference key="12">
    <citation type="journal article" date="2011" name="Expert Opin. Invest. Drugs">
        <title>Crotamine toxicity and efficacy in mouse models of melanoma.</title>
        <authorList>
            <person name="Pereira A."/>
            <person name="Kerkis A."/>
            <person name="Hayashi M.A.F."/>
            <person name="Pereira A.S."/>
            <person name="Silva F.S."/>
            <person name="Oliveira E.B."/>
            <person name="Prieto da Silva A.R."/>
            <person name="Yamane T."/>
            <person name="Radis-Baptista G."/>
            <person name="Kerkis I."/>
        </authorList>
    </citation>
    <scope>BIOASSAY IN MOUSE MODELS OF MELANOMA</scope>
</reference>
<reference key="13">
    <citation type="journal article" date="2011" name="J. Antibiot.">
        <title>In vitro antibacterial and hemolytic activities of crotamine, a small basic myotoxin from rattlesnake Crotalus durissus.</title>
        <authorList>
            <person name="Oguiura N."/>
            <person name="Boni-Mitake M."/>
            <person name="Affonso R."/>
            <person name="Zhang G."/>
        </authorList>
    </citation>
    <scope>FUNCTION AS ANTIBACTERIAL PEPTIDE</scope>
</reference>
<reference key="14">
    <citation type="journal article" date="2012" name="Mol. Pharm.">
        <title>The natural cell-penetrating peptide crotamine targets tumor tissue in vivo and triggers a lethal calcium-dependent pathway in cultured cells.</title>
        <authorList>
            <person name="Nascimento F.D."/>
            <person name="Sancey L."/>
            <person name="Pereira A."/>
            <person name="Rome C."/>
            <person name="Oliveira V."/>
            <person name="Oliveira E.B."/>
            <person name="Nader H.B."/>
            <person name="Yamane T."/>
            <person name="Kerkis I."/>
            <person name="Tersariol I.L."/>
            <person name="Coll J.L."/>
            <person name="Hayashi M.A.F."/>
        </authorList>
    </citation>
    <scope>FUNCTION</scope>
</reference>
<reference key="15">
    <citation type="journal article" date="2013" name="Biochimie">
        <title>Unraveling the antifungal activity of a South American rattlesnake toxin crotamine.</title>
        <authorList>
            <person name="Yamane E.S."/>
            <person name="Bizerra F.C."/>
            <person name="Oliveira E.B."/>
            <person name="Moreira J.T."/>
            <person name="Rajabi M."/>
            <person name="Nunes G.L."/>
            <person name="de Souza A.O."/>
            <person name="da Silva I.D."/>
            <person name="Yamane T."/>
            <person name="Karpel R.L."/>
            <person name="Silva P.I. Jr."/>
            <person name="Hayashi M.A.F."/>
        </authorList>
    </citation>
    <scope>FUNCTION AS ANTIMICROBIAL PEPTIDE</scope>
    <scope>SYNTHESIS OF 23-65</scope>
    <scope>CIRCULAR DICHROISM ANALYSIS</scope>
    <source>
        <tissue>Venom</tissue>
    </source>
</reference>
<reference key="16">
    <citation type="journal article" date="2010" name="Expert Opin. Invest. Drugs">
        <title>Biological versatility of crotamine--a cationic peptide from the venom of a South American rattlesnake.</title>
        <authorList>
            <person name="Kerkis I."/>
            <person name="Silva F.S."/>
            <person name="Pereira A."/>
            <person name="Kerkis A."/>
            <person name="Radis-Baptista G."/>
        </authorList>
    </citation>
    <scope>REVIEW</scope>
</reference>
<reference key="17">
    <citation type="journal article" date="2003" name="Eur. J. Biochem.">
        <title>Solution structure of crotamine, a Na+ channel affecting toxin from Crotalus durissus terrificus venom.</title>
        <authorList>
            <person name="Nicastro G."/>
            <person name="Franzoni L."/>
            <person name="de Chiara C."/>
            <person name="Mancin A.C."/>
            <person name="Giglio J.R."/>
            <person name="Spisni A."/>
        </authorList>
    </citation>
    <scope>STRUCTURE BY NMR OF 23-64</scope>
    <scope>DISULFIDE BONDS</scope>
</reference>
<reference key="18">
    <citation type="journal article" date="2005" name="Toxicon">
        <title>Automated NMR structure determination and disulfide bond identification of the myotoxin crotamine from Crotalus durissus terrificus.</title>
        <authorList>
            <person name="Fadel V."/>
            <person name="Bettendorff P."/>
            <person name="Herrmann T."/>
            <person name="de Azevedo W.F. Jr."/>
            <person name="Oliveira E.B."/>
            <person name="Yamane T."/>
            <person name="Wuthrich K."/>
        </authorList>
    </citation>
    <scope>STRUCTURE BY NMR OF 23-64</scope>
    <scope>DISULFIDE BONDS</scope>
</reference>
<keyword id="KW-0002">3D-structure</keyword>
<keyword id="KW-0044">Antibiotic</keyword>
<keyword id="KW-0929">Antimicrobial</keyword>
<keyword id="KW-0903">Direct protein sequencing</keyword>
<keyword id="KW-1015">Disulfide bond</keyword>
<keyword id="KW-0295">Fungicide</keyword>
<keyword id="KW-0872">Ion channel impairing toxin</keyword>
<keyword id="KW-0959">Myotoxin</keyword>
<keyword id="KW-0528">Neurotoxin</keyword>
<keyword id="KW-0582">Pharmaceutical</keyword>
<keyword id="KW-0632">Potassium channel impairing toxin</keyword>
<keyword id="KW-0964">Secreted</keyword>
<keyword id="KW-0732">Signal</keyword>
<keyword id="KW-0800">Toxin</keyword>
<keyword id="KW-1220">Voltage-gated potassium channel impairing toxin</keyword>
<proteinExistence type="evidence at protein level"/>
<comment type="function">
    <text evidence="2 4 6 7 8 9 10 11 12 13 14 15">Cationic peptide that possesses multiple functions. It acts as a cell-penetrating peptide (CPP), and as a potent voltage-gated potassium channel inhibitor. It exhibits antimicrobial activities, hind limb paralysis, and severe muscle necrosis by a non-enzymatic mechanism. As a cell-penetrating peptide, crotamine has high specificity for actively proliferating cells, and interacts inside the cell with subcellular and subnuclear structures, like vesicular compartments, chromosomes and centrioles. It penetrates into the cells as fast as five minutes after its addition to cell culture medium (PubMed:18662711). In vivo, after intraperitoneal administration, it is found in cells of peritoneal fluid and bone marrow, demonstrating preferential nuclear and perinuclear localization. To enter the cell, it interacts with the chains of heparan sulfate membrane proteoglycan (HSPG), and is endocytosed (in complex with HSPG) in vesicles which are transported into the cell with the help of clathrin. Inside the cell, crotamine accumulates in lysosomal vesicles. As soon as the peptide accumulates in endosomes/lysosomes vesicles, these compartments are disrupted and their contents released into the cytosol. This loss of lysosomal content induces cell death at high concentrations, or promotes the distribution of crotamine in cytoplasmic compartments, which is a step before crotamine nuclear uptake (PubMed:15231729, PubMed:17491023). As a potassium channel inhibitor, this toxin selectively inhibits Kv1.1/KCNA1, Kv1.2/KCNA2 and Kv1.3/KCNA3 channels with an IC(50) of 369, 386 and 287 nM, respectively (PubMed:22498659). The inhibition of Kv1.3/KCNA channels induced by this toxin occurs rapidly and is voltage-independent. The channel inhibition is reversible after washing, suggesting a pure and classical channel blockage effect, without effects in potassium channel kinetics (PubMed:22498659). As an antimicrobial peptide, crotamine shows antibacterial activity against E.coli and B.subtilis, and antifungal activity against Candida spp., Trichosporon spp. and C.neoformans. It kills bacteria through membrane permeabilization.</text>
</comment>
<comment type="subunit">
    <text evidence="1">Monomer.</text>
</comment>
<comment type="subcellular location">
    <subcellularLocation>
        <location evidence="2">Secreted</location>
    </subcellularLocation>
</comment>
<comment type="tissue specificity">
    <text evidence="19">Expressed by the venom gland.</text>
</comment>
<comment type="mass spectrometry" mass="4885.6" method="Electrospray" evidence="12"/>
<comment type="toxic dose">
    <text evidence="2">LD(50) is 1.5 mg/kg by intravenous injection.</text>
</comment>
<comment type="toxic dose">
    <text evidence="15">LD(50) is 32.8 mg/kg by intraperitoneal injection into mice.</text>
</comment>
<comment type="pharmaceutical">
    <text>Has high potential for use as an anticancer agent. In vivo treatment with this protein significantly delays tumor implantation, inhibits tumor growth and prolongs the lifespan of the mice with melanoma tumors. It also has potent and specific toxicity against tumor cell lines of aggressive mouse and human tumors, but low cytotoxicity against non-tumoral cell lines. In addition, this protein can act as a carrier capable of delivering DNA into replicating cells with low cytotoxicity against normal proliferative cells (PubMed:21062230, PubMed:21834748, PubMed:22142367).</text>
</comment>
<comment type="miscellaneous">
    <text evidence="20 21 22">Negative results: has no hemolytic activity (PubMed:21386851, PubMed:23022146). Has low harmful effects on normal mammal cells. Does not show activity against the filamentous fungi A.fumigatus and T.rubrum at concentrations up to 125 ug/mL (PubMed:23022146). Does not directly affect voltage-gated sodium channels Nav1.1/SCN1A, Nav1.2/SCN2A, Nav1.3/SCN3A, Nav1.4/SCN4A, Nav1.5/SCN5A and Nav1.6/SCN8A (PubMed:17588630).</text>
</comment>
<comment type="similarity">
    <text evidence="17">Belongs to the crotamine-myotoxin family.</text>
</comment>
<comment type="caution">
    <text evidence="17">The analgesic activity produced by crotamine in Mancin et al., 1998 may be a misinterpretation (PubMed:9839677). This activity is probably due to the co-elution with the 14 amino acids crotalphine peptide (AC P08878). In that article crotamine was purified uniquely by gel filtration G-75. This single chromatographic step without going through a RP-HPLC is not sufficient to separate crotamine from other low molecular weight peptides such as the potent analgesic crotalphine peptide.</text>
</comment>
<comment type="caution">
    <text evidence="18">Studies have shown that crotamine is present in the venom of certain specimens of C.durissus terrificus, and absent in others. This is due to geographical variations (PubMed:10484745).</text>
</comment>
<comment type="online information" name="Wikipedia">
    <link uri="https://en.wikipedia.org/wiki/Crotamine"/>
</comment>
<name>MYC2_CRODU</name>
<dbReference type="EMBL" id="AF053075">
    <property type="protein sequence ID" value="AAC06241.1"/>
    <property type="molecule type" value="mRNA"/>
</dbReference>
<dbReference type="EMBL" id="AF223946">
    <property type="protein sequence ID" value="AAF34910.1"/>
    <property type="molecule type" value="Genomic_DNA"/>
</dbReference>
<dbReference type="EMBL" id="AF223947">
    <property type="protein sequence ID" value="AAF34911.1"/>
    <property type="molecule type" value="Genomic_DNA"/>
</dbReference>
<dbReference type="PIR" id="A01735">
    <property type="entry name" value="CXRSMT"/>
</dbReference>
<dbReference type="PDB" id="1H5O">
    <property type="method" value="NMR"/>
    <property type="chains" value="A=23-64"/>
</dbReference>
<dbReference type="PDB" id="1Z99">
    <property type="method" value="NMR"/>
    <property type="chains" value="A=23-64"/>
</dbReference>
<dbReference type="PDBsum" id="1H5O"/>
<dbReference type="PDBsum" id="1Z99"/>
<dbReference type="BMRB" id="Q9PWF3"/>
<dbReference type="SMR" id="Q9PWF3"/>
<dbReference type="EvolutionaryTrace" id="Q9PWF3"/>
<dbReference type="GO" id="GO:0005576">
    <property type="term" value="C:extracellular region"/>
    <property type="evidence" value="ECO:0007669"/>
    <property type="project" value="UniProtKB-SubCell"/>
</dbReference>
<dbReference type="GO" id="GO:0015459">
    <property type="term" value="F:potassium channel regulator activity"/>
    <property type="evidence" value="ECO:0007669"/>
    <property type="project" value="UniProtKB-KW"/>
</dbReference>
<dbReference type="GO" id="GO:0090729">
    <property type="term" value="F:toxin activity"/>
    <property type="evidence" value="ECO:0007669"/>
    <property type="project" value="UniProtKB-KW"/>
</dbReference>
<dbReference type="GO" id="GO:0042742">
    <property type="term" value="P:defense response to bacterium"/>
    <property type="evidence" value="ECO:0007669"/>
    <property type="project" value="UniProtKB-KW"/>
</dbReference>
<dbReference type="GO" id="GO:0050832">
    <property type="term" value="P:defense response to fungus"/>
    <property type="evidence" value="ECO:0007669"/>
    <property type="project" value="UniProtKB-KW"/>
</dbReference>
<dbReference type="GO" id="GO:0044564">
    <property type="term" value="P:envenomation resulting in occlusion of the pore of voltage-gated potassium channel in another organism"/>
    <property type="evidence" value="ECO:0000314"/>
    <property type="project" value="UniProtKB"/>
</dbReference>
<dbReference type="GO" id="GO:0031640">
    <property type="term" value="P:killing of cells of another organism"/>
    <property type="evidence" value="ECO:0007669"/>
    <property type="project" value="UniProtKB-KW"/>
</dbReference>
<dbReference type="FunFam" id="2.20.20.10:FF:000001">
    <property type="entry name" value="Crotamine"/>
    <property type="match status" value="1"/>
</dbReference>
<dbReference type="Gene3D" id="2.20.20.10">
    <property type="entry name" value="Anthopleurin-A"/>
    <property type="match status" value="1"/>
</dbReference>
<dbReference type="InterPro" id="IPR023355">
    <property type="entry name" value="Myo_ane_neurotoxin_sf"/>
</dbReference>
<dbReference type="InterPro" id="IPR000881">
    <property type="entry name" value="Myotoxin"/>
</dbReference>
<dbReference type="Pfam" id="PF00819">
    <property type="entry name" value="Myotoxins"/>
    <property type="match status" value="1"/>
</dbReference>
<dbReference type="PRINTS" id="PR00283">
    <property type="entry name" value="MYOTOXIN"/>
</dbReference>
<dbReference type="SUPFAM" id="SSF57392">
    <property type="entry name" value="Defensin-like"/>
    <property type="match status" value="1"/>
</dbReference>
<dbReference type="PROSITE" id="PS00459">
    <property type="entry name" value="MYOTOXINS_1"/>
    <property type="match status" value="1"/>
</dbReference>
<dbReference type="PROSITE" id="PS51345">
    <property type="entry name" value="MYOTOXINS_2"/>
    <property type="match status" value="1"/>
</dbReference>
<evidence type="ECO:0000250" key="1"/>
<evidence type="ECO:0000269" key="2">
    <source>
    </source>
</evidence>
<evidence type="ECO:0000269" key="3">
    <source>
    </source>
</evidence>
<evidence type="ECO:0000269" key="4">
    <source>
    </source>
</evidence>
<evidence type="ECO:0000269" key="5">
    <source>
    </source>
</evidence>
<evidence type="ECO:0000269" key="6">
    <source>
    </source>
</evidence>
<evidence type="ECO:0000269" key="7">
    <source>
    </source>
</evidence>
<evidence type="ECO:0000269" key="8">
    <source>
    </source>
</evidence>
<evidence type="ECO:0000269" key="9">
    <source>
    </source>
</evidence>
<evidence type="ECO:0000269" key="10">
    <source>
    </source>
</evidence>
<evidence type="ECO:0000269" key="11">
    <source>
    </source>
</evidence>
<evidence type="ECO:0000269" key="12">
    <source>
    </source>
</evidence>
<evidence type="ECO:0000269" key="13">
    <source>
    </source>
</evidence>
<evidence type="ECO:0000269" key="14">
    <source>
    </source>
</evidence>
<evidence type="ECO:0000269" key="15">
    <source>
    </source>
</evidence>
<evidence type="ECO:0000303" key="16">
    <source>
    </source>
</evidence>
<evidence type="ECO:0000305" key="17"/>
<evidence type="ECO:0000305" key="18">
    <source>
    </source>
</evidence>
<evidence type="ECO:0000305" key="19">
    <source>
    </source>
</evidence>
<evidence type="ECO:0000305" key="20">
    <source>
    </source>
</evidence>
<evidence type="ECO:0000305" key="21">
    <source>
    </source>
</evidence>
<evidence type="ECO:0000305" key="22">
    <source>
    </source>
</evidence>
<evidence type="ECO:0000312" key="23">
    <source>
        <dbReference type="PDB" id="1H5O"/>
    </source>
</evidence>
<evidence type="ECO:0000312" key="24">
    <source>
        <dbReference type="PDB" id="1Z99"/>
    </source>
</evidence>
<evidence type="ECO:0007829" key="25">
    <source>
        <dbReference type="PDB" id="1H5O"/>
    </source>
</evidence>
<evidence type="ECO:0007829" key="26">
    <source>
        <dbReference type="PDB" id="1Z99"/>
    </source>
</evidence>
<feature type="signal peptide" evidence="2">
    <location>
        <begin position="1"/>
        <end position="22"/>
    </location>
</feature>
<feature type="chain" id="PRO_0000035184" description="Crotamine" evidence="2">
    <location>
        <begin position="23"/>
        <end position="64"/>
    </location>
</feature>
<feature type="short sequence motif" description="Nuclear localization signal">
    <location>
        <begin position="24"/>
        <end position="40"/>
    </location>
</feature>
<feature type="short sequence motif" description="Nuclear localization signal">
    <location>
        <begin position="49"/>
        <end position="61"/>
    </location>
</feature>
<feature type="site" description="Involved in the interaction surface toward Kv" evidence="17">
    <location>
        <position position="23"/>
    </location>
</feature>
<feature type="site" description="Involved in the interaction surface toward Kv" evidence="17">
    <location>
        <position position="24"/>
    </location>
</feature>
<feature type="site" description="Involved in the interaction surface toward Kv" evidence="17">
    <location>
        <position position="55"/>
    </location>
</feature>
<feature type="site" description="Involved in the interaction surface toward Kv" evidence="17">
    <location>
        <position position="56"/>
    </location>
</feature>
<feature type="disulfide bond" evidence="3 5 23 24">
    <location>
        <begin position="26"/>
        <end position="58"/>
    </location>
</feature>
<feature type="disulfide bond" evidence="3 5 23 24">
    <location>
        <begin position="33"/>
        <end position="52"/>
    </location>
</feature>
<feature type="disulfide bond" evidence="3 5 23 24">
    <location>
        <begin position="40"/>
        <end position="59"/>
    </location>
</feature>
<feature type="helix" evidence="25">
    <location>
        <begin position="25"/>
        <end position="29"/>
    </location>
</feature>
<feature type="strand" evidence="25">
    <location>
        <begin position="32"/>
        <end position="34"/>
    </location>
</feature>
<feature type="helix" evidence="26">
    <location>
        <begin position="36"/>
        <end position="38"/>
    </location>
</feature>
<feature type="strand" evidence="25">
    <location>
        <begin position="41"/>
        <end position="52"/>
    </location>
</feature>
<feature type="strand" evidence="25">
    <location>
        <begin position="57"/>
        <end position="60"/>
    </location>
</feature>
<protein>
    <recommendedName>
        <fullName evidence="16">Crotamine</fullName>
        <shortName>Crt</shortName>
    </recommendedName>
    <alternativeName>
        <fullName>Myotoxin</fullName>
    </alternativeName>
</protein>
<gene>
    <name type="primary">CRO2</name>
    <name type="synonym">CRT-P1</name>
</gene>
<accession>Q9PWF3</accession>
<accession>P01475</accession>
<sequence length="65" mass="7519">MKILYLLFAFLFLAFLSEPGNAYKQCHKKGGHCFPKEKICLPPSSDFGKMDCRWRWKCCKKGSGK</sequence>